<proteinExistence type="predicted"/>
<feature type="chain" id="PRO_0000169218" description="Uncharacterized protein YfeC">
    <location>
        <begin position="1"/>
        <end position="114"/>
    </location>
</feature>
<evidence type="ECO:0000305" key="1"/>
<comment type="similarity">
    <text evidence="1">To E.coli YfiI and P.aeruginosa RluD.</text>
</comment>
<comment type="sequence caution" evidence="1">
    <conflict type="erroneous initiation">
        <sequence resource="EMBL-CDS" id="AAN81384"/>
    </conflict>
</comment>
<reference key="1">
    <citation type="journal article" date="2002" name="Proc. Natl. Acad. Sci. U.S.A.">
        <title>Extensive mosaic structure revealed by the complete genome sequence of uropathogenic Escherichia coli.</title>
        <authorList>
            <person name="Welch R.A."/>
            <person name="Burland V."/>
            <person name="Plunkett G. III"/>
            <person name="Redford P."/>
            <person name="Roesch P."/>
            <person name="Rasko D."/>
            <person name="Buckles E.L."/>
            <person name="Liou S.-R."/>
            <person name="Boutin A."/>
            <person name="Hackett J."/>
            <person name="Stroud D."/>
            <person name="Mayhew G.F."/>
            <person name="Rose D.J."/>
            <person name="Zhou S."/>
            <person name="Schwartz D.C."/>
            <person name="Perna N.T."/>
            <person name="Mobley H.L.T."/>
            <person name="Donnenberg M.S."/>
            <person name="Blattner F.R."/>
        </authorList>
    </citation>
    <scope>NUCLEOTIDE SEQUENCE [LARGE SCALE GENOMIC DNA]</scope>
    <source>
        <strain>CFT073 / ATCC 700928 / UPEC</strain>
    </source>
</reference>
<organism>
    <name type="scientific">Escherichia coli O6:H1 (strain CFT073 / ATCC 700928 / UPEC)</name>
    <dbReference type="NCBI Taxonomy" id="199310"/>
    <lineage>
        <taxon>Bacteria</taxon>
        <taxon>Pseudomonadati</taxon>
        <taxon>Pseudomonadota</taxon>
        <taxon>Gammaproteobacteria</taxon>
        <taxon>Enterobacterales</taxon>
        <taxon>Enterobacteriaceae</taxon>
        <taxon>Escherichia</taxon>
    </lineage>
</organism>
<sequence length="114" mass="12720">MTPDELARLTGYSRQTINKWVRKEGWTTSPKPGVQGGKARLVHVNEQVREYIRNAERPEGQGEAPALSGDAPLEVLLVTLAKEMTPVEQKQFTSLLLREGIIGLLQRLGIRDSK</sequence>
<accession>P0AD38</accession>
<accession>P27239</accession>
<accession>P76530</accession>
<accession>P76956</accession>
<gene>
    <name type="primary">yfeC</name>
    <name type="ordered locus">c2934</name>
</gene>
<dbReference type="EMBL" id="AE014075">
    <property type="protein sequence ID" value="AAN81384.1"/>
    <property type="status" value="ALT_INIT"/>
    <property type="molecule type" value="Genomic_DNA"/>
</dbReference>
<dbReference type="SMR" id="P0AD38"/>
<dbReference type="STRING" id="199310.c2934"/>
<dbReference type="KEGG" id="ecc:c2934"/>
<dbReference type="eggNOG" id="COG3415">
    <property type="taxonomic scope" value="Bacteria"/>
</dbReference>
<dbReference type="HOGENOM" id="CLU_168146_0_0_6"/>
<dbReference type="Proteomes" id="UP000001410">
    <property type="component" value="Chromosome"/>
</dbReference>
<dbReference type="InterPro" id="IPR009061">
    <property type="entry name" value="DNA-bd_dom_put_sf"/>
</dbReference>
<dbReference type="InterPro" id="IPR010749">
    <property type="entry name" value="YfeC-like"/>
</dbReference>
<dbReference type="Pfam" id="PF07037">
    <property type="entry name" value="YfeC-like"/>
    <property type="match status" value="1"/>
</dbReference>
<dbReference type="SUPFAM" id="SSF46955">
    <property type="entry name" value="Putative DNA-binding domain"/>
    <property type="match status" value="1"/>
</dbReference>
<protein>
    <recommendedName>
        <fullName>Uncharacterized protein YfeC</fullName>
    </recommendedName>
</protein>
<name>YFEC_ECOL6</name>
<keyword id="KW-1185">Reference proteome</keyword>